<reference key="1">
    <citation type="journal article" date="1996" name="Mol. Biol. Evol.">
        <title>Phylogeny and substitution rates of angiosperm actin genes.</title>
        <authorList>
            <person name="Moniz de Sa M."/>
            <person name="Drouin G."/>
        </authorList>
    </citation>
    <scope>NUCLEOTIDE SEQUENCE [GENOMIC DNA]</scope>
</reference>
<dbReference type="EC" id="3.6.4.-" evidence="1"/>
<dbReference type="EMBL" id="U60480">
    <property type="protein sequence ID" value="AAB40093.1"/>
    <property type="molecule type" value="Genomic_DNA"/>
</dbReference>
<dbReference type="SMR" id="Q96482"/>
<dbReference type="STRING" id="4081.Q96482"/>
<dbReference type="PaxDb" id="4081-Solyc04g011500.2.1"/>
<dbReference type="eggNOG" id="KOG0676">
    <property type="taxonomic scope" value="Eukaryota"/>
</dbReference>
<dbReference type="InParanoid" id="Q96482"/>
<dbReference type="Proteomes" id="UP000004994">
    <property type="component" value="Unplaced"/>
</dbReference>
<dbReference type="ExpressionAtlas" id="Q96482">
    <property type="expression patterns" value="baseline and differential"/>
</dbReference>
<dbReference type="GO" id="GO:0015629">
    <property type="term" value="C:actin cytoskeleton"/>
    <property type="evidence" value="ECO:0000318"/>
    <property type="project" value="GO_Central"/>
</dbReference>
<dbReference type="GO" id="GO:0005737">
    <property type="term" value="C:cytoplasm"/>
    <property type="evidence" value="ECO:0007669"/>
    <property type="project" value="UniProtKB-KW"/>
</dbReference>
<dbReference type="GO" id="GO:0005524">
    <property type="term" value="F:ATP binding"/>
    <property type="evidence" value="ECO:0007669"/>
    <property type="project" value="UniProtKB-KW"/>
</dbReference>
<dbReference type="GO" id="GO:0016787">
    <property type="term" value="F:hydrolase activity"/>
    <property type="evidence" value="ECO:0007669"/>
    <property type="project" value="UniProtKB-KW"/>
</dbReference>
<dbReference type="CDD" id="cd10224">
    <property type="entry name" value="ASKHA_NBD_actin"/>
    <property type="match status" value="1"/>
</dbReference>
<dbReference type="FunFam" id="2.30.36.70:FF:000001">
    <property type="entry name" value="Actin, alpha skeletal muscle"/>
    <property type="match status" value="1"/>
</dbReference>
<dbReference type="FunFam" id="3.30.420.40:FF:000291">
    <property type="entry name" value="Actin, alpha skeletal muscle"/>
    <property type="match status" value="1"/>
</dbReference>
<dbReference type="FunFam" id="3.90.640.10:FF:000001">
    <property type="entry name" value="Actin, muscle"/>
    <property type="match status" value="1"/>
</dbReference>
<dbReference type="FunFam" id="3.30.420.40:FF:000404">
    <property type="entry name" value="Major actin"/>
    <property type="match status" value="1"/>
</dbReference>
<dbReference type="Gene3D" id="3.30.420.40">
    <property type="match status" value="2"/>
</dbReference>
<dbReference type="Gene3D" id="3.90.640.10">
    <property type="entry name" value="Actin, Chain A, domain 4"/>
    <property type="match status" value="1"/>
</dbReference>
<dbReference type="InterPro" id="IPR004000">
    <property type="entry name" value="Actin"/>
</dbReference>
<dbReference type="InterPro" id="IPR020902">
    <property type="entry name" value="Actin/actin-like_CS"/>
</dbReference>
<dbReference type="InterPro" id="IPR004001">
    <property type="entry name" value="Actin_CS"/>
</dbReference>
<dbReference type="InterPro" id="IPR043129">
    <property type="entry name" value="ATPase_NBD"/>
</dbReference>
<dbReference type="PANTHER" id="PTHR11937">
    <property type="entry name" value="ACTIN"/>
    <property type="match status" value="1"/>
</dbReference>
<dbReference type="Pfam" id="PF00022">
    <property type="entry name" value="Actin"/>
    <property type="match status" value="1"/>
</dbReference>
<dbReference type="PRINTS" id="PR00190">
    <property type="entry name" value="ACTIN"/>
</dbReference>
<dbReference type="SMART" id="SM00268">
    <property type="entry name" value="ACTIN"/>
    <property type="match status" value="1"/>
</dbReference>
<dbReference type="SUPFAM" id="SSF53067">
    <property type="entry name" value="Actin-like ATPase domain"/>
    <property type="match status" value="2"/>
</dbReference>
<dbReference type="PROSITE" id="PS00406">
    <property type="entry name" value="ACTINS_1"/>
    <property type="match status" value="1"/>
</dbReference>
<dbReference type="PROSITE" id="PS01132">
    <property type="entry name" value="ACTINS_ACT_LIKE"/>
    <property type="match status" value="1"/>
</dbReference>
<accession>Q96482</accession>
<comment type="function">
    <text>Actins are highly conserved proteins that are involved in various types of cell motility and are ubiquitously expressed in all eukaryotic cells. Essential component of cell cytoskeleton; plays an important role in cytoplasmic streaming, cell shape determination, cell division, organelle movement and extension growth.</text>
</comment>
<comment type="catalytic activity">
    <reaction evidence="1">
        <text>ATP + H2O = ADP + phosphate + H(+)</text>
        <dbReference type="Rhea" id="RHEA:13065"/>
        <dbReference type="ChEBI" id="CHEBI:15377"/>
        <dbReference type="ChEBI" id="CHEBI:15378"/>
        <dbReference type="ChEBI" id="CHEBI:30616"/>
        <dbReference type="ChEBI" id="CHEBI:43474"/>
        <dbReference type="ChEBI" id="CHEBI:456216"/>
    </reaction>
</comment>
<comment type="subcellular location">
    <subcellularLocation>
        <location>Cytoplasm</location>
        <location>Cytoskeleton</location>
    </subcellularLocation>
</comment>
<comment type="miscellaneous">
    <text>There are at least 5 different actin genes in tomato.</text>
</comment>
<comment type="similarity">
    <text evidence="2">Belongs to the actin family.</text>
</comment>
<feature type="chain" id="PRO_0000088955" description="Actin-41">
    <location>
        <begin position="1" status="less than"/>
        <end position="336" status="greater than"/>
    </location>
</feature>
<feature type="non-terminal residue">
    <location>
        <position position="1"/>
    </location>
</feature>
<feature type="non-terminal residue">
    <location>
        <position position="336"/>
    </location>
</feature>
<name>ACT1_SOLLC</name>
<proteinExistence type="inferred from homology"/>
<evidence type="ECO:0000250" key="1">
    <source>
        <dbReference type="UniProtKB" id="P68137"/>
    </source>
</evidence>
<evidence type="ECO:0000305" key="2"/>
<organism>
    <name type="scientific">Solanum lycopersicum</name>
    <name type="common">Tomato</name>
    <name type="synonym">Lycopersicon esculentum</name>
    <dbReference type="NCBI Taxonomy" id="4081"/>
    <lineage>
        <taxon>Eukaryota</taxon>
        <taxon>Viridiplantae</taxon>
        <taxon>Streptophyta</taxon>
        <taxon>Embryophyta</taxon>
        <taxon>Tracheophyta</taxon>
        <taxon>Spermatophyta</taxon>
        <taxon>Magnoliopsida</taxon>
        <taxon>eudicotyledons</taxon>
        <taxon>Gunneridae</taxon>
        <taxon>Pentapetalae</taxon>
        <taxon>asterids</taxon>
        <taxon>lamiids</taxon>
        <taxon>Solanales</taxon>
        <taxon>Solanaceae</taxon>
        <taxon>Solanoideae</taxon>
        <taxon>Solaneae</taxon>
        <taxon>Solanum</taxon>
        <taxon>Solanum subgen. Lycopersicon</taxon>
    </lineage>
</organism>
<keyword id="KW-0067">ATP-binding</keyword>
<keyword id="KW-0963">Cytoplasm</keyword>
<keyword id="KW-0206">Cytoskeleton</keyword>
<keyword id="KW-0378">Hydrolase</keyword>
<keyword id="KW-0547">Nucleotide-binding</keyword>
<keyword id="KW-1185">Reference proteome</keyword>
<sequence>AGFAGDDAPRAVFPSIVGRPRHTGVMVGMGQKDAYVGDEAQSKRGILTLKYPIEHGIVSNWDDMEKIWHHTFYNELRVAPEEHPVLLTEAPLNPKANREKMTQIMFETFNTPAMYVAIQAVLSLYASGRSTGIVLDSGDGLSHTVPIYEGYALPHAILRLDLAGRDLTDSLMKILTERGYSFTTSAEREIVRDVKEKLAYIALDYEQELETSKTSSSVEKSYELPDGQVIPIGSERFRCPEVLFQPSMIGMEAAGIHETTYNSIMKCDVDIRKDLYGNIVLSGGTTMFPGIADRMSKEITALAPSSMKIKVVAPPERKYSVWIGGSILASLSTFQQ</sequence>
<protein>
    <recommendedName>
        <fullName>Actin-41</fullName>
        <ecNumber evidence="1">3.6.4.-</ecNumber>
    </recommendedName>
</protein>